<comment type="function">
    <text evidence="1">Represses a number of genes involved in the response to DNA damage (SOS response), including recA and lexA. Binds to the 16 bp palindromic sequence 5'-CTGTATATATATACAG-3'. In the presence of single-stranded DNA, RecA interacts with LexA causing an autocatalytic cleavage which disrupts the DNA-binding part of LexA, leading to derepression of the SOS regulon and eventually DNA repair.</text>
</comment>
<comment type="catalytic activity">
    <reaction evidence="1">
        <text>Hydrolysis of Ala-|-Gly bond in repressor LexA.</text>
        <dbReference type="EC" id="3.4.21.88"/>
    </reaction>
</comment>
<comment type="subunit">
    <text evidence="1">Homodimer.</text>
</comment>
<comment type="similarity">
    <text evidence="1">Belongs to the peptidase S24 family.</text>
</comment>
<protein>
    <recommendedName>
        <fullName evidence="1">LexA repressor</fullName>
        <ecNumber evidence="1">3.4.21.88</ecNumber>
    </recommendedName>
</protein>
<evidence type="ECO:0000255" key="1">
    <source>
        <dbReference type="HAMAP-Rule" id="MF_00015"/>
    </source>
</evidence>
<keyword id="KW-0068">Autocatalytic cleavage</keyword>
<keyword id="KW-0227">DNA damage</keyword>
<keyword id="KW-0234">DNA repair</keyword>
<keyword id="KW-0235">DNA replication</keyword>
<keyword id="KW-0238">DNA-binding</keyword>
<keyword id="KW-0378">Hydrolase</keyword>
<keyword id="KW-0678">Repressor</keyword>
<keyword id="KW-0742">SOS response</keyword>
<keyword id="KW-0804">Transcription</keyword>
<keyword id="KW-0805">Transcription regulation</keyword>
<sequence>MKVLTARQQQVYDLIRDHIAQTGMPPTRAEIAQQLGFRSPNAAEEHLKALARKGVIEIVSGASRGIRLLMEEETGIPLVGRVAAGEPLLAQEHIECHYQVDPAMFKPSADFLLRVSGMSMKDIGIMDGDLLAVHKTEDVRNGQIVVARIDDEVTVKRLKKQGNMVHLLAENEEFAPIVVDLRQQSFSIEGLAVGVIRNSDWS</sequence>
<dbReference type="EC" id="3.4.21.88" evidence="1"/>
<dbReference type="EMBL" id="CP001657">
    <property type="protein sequence ID" value="ACT11569.1"/>
    <property type="molecule type" value="Genomic_DNA"/>
</dbReference>
<dbReference type="RefSeq" id="WP_012773222.1">
    <property type="nucleotide sequence ID" value="NC_012917.1"/>
</dbReference>
<dbReference type="SMR" id="C6DKD2"/>
<dbReference type="STRING" id="561230.PC1_0514"/>
<dbReference type="MEROPS" id="S24.001"/>
<dbReference type="GeneID" id="67795651"/>
<dbReference type="KEGG" id="pct:PC1_0514"/>
<dbReference type="eggNOG" id="COG1974">
    <property type="taxonomic scope" value="Bacteria"/>
</dbReference>
<dbReference type="HOGENOM" id="CLU_066192_45_3_6"/>
<dbReference type="OrthoDB" id="9802364at2"/>
<dbReference type="Proteomes" id="UP000002736">
    <property type="component" value="Chromosome"/>
</dbReference>
<dbReference type="GO" id="GO:0003677">
    <property type="term" value="F:DNA binding"/>
    <property type="evidence" value="ECO:0007669"/>
    <property type="project" value="UniProtKB-UniRule"/>
</dbReference>
<dbReference type="GO" id="GO:0004252">
    <property type="term" value="F:serine-type endopeptidase activity"/>
    <property type="evidence" value="ECO:0007669"/>
    <property type="project" value="UniProtKB-UniRule"/>
</dbReference>
<dbReference type="GO" id="GO:0006281">
    <property type="term" value="P:DNA repair"/>
    <property type="evidence" value="ECO:0007669"/>
    <property type="project" value="UniProtKB-UniRule"/>
</dbReference>
<dbReference type="GO" id="GO:0006260">
    <property type="term" value="P:DNA replication"/>
    <property type="evidence" value="ECO:0007669"/>
    <property type="project" value="UniProtKB-UniRule"/>
</dbReference>
<dbReference type="GO" id="GO:0045892">
    <property type="term" value="P:negative regulation of DNA-templated transcription"/>
    <property type="evidence" value="ECO:0007669"/>
    <property type="project" value="UniProtKB-UniRule"/>
</dbReference>
<dbReference type="GO" id="GO:0006508">
    <property type="term" value="P:proteolysis"/>
    <property type="evidence" value="ECO:0007669"/>
    <property type="project" value="InterPro"/>
</dbReference>
<dbReference type="GO" id="GO:0009432">
    <property type="term" value="P:SOS response"/>
    <property type="evidence" value="ECO:0007669"/>
    <property type="project" value="UniProtKB-UniRule"/>
</dbReference>
<dbReference type="CDD" id="cd06529">
    <property type="entry name" value="S24_LexA-like"/>
    <property type="match status" value="1"/>
</dbReference>
<dbReference type="FunFam" id="1.10.10.10:FF:000009">
    <property type="entry name" value="LexA repressor"/>
    <property type="match status" value="1"/>
</dbReference>
<dbReference type="FunFam" id="2.10.109.10:FF:000001">
    <property type="entry name" value="LexA repressor"/>
    <property type="match status" value="1"/>
</dbReference>
<dbReference type="Gene3D" id="2.10.109.10">
    <property type="entry name" value="Umud Fragment, subunit A"/>
    <property type="match status" value="1"/>
</dbReference>
<dbReference type="Gene3D" id="1.10.10.10">
    <property type="entry name" value="Winged helix-like DNA-binding domain superfamily/Winged helix DNA-binding domain"/>
    <property type="match status" value="1"/>
</dbReference>
<dbReference type="HAMAP" id="MF_00015">
    <property type="entry name" value="LexA"/>
    <property type="match status" value="1"/>
</dbReference>
<dbReference type="InterPro" id="IPR006200">
    <property type="entry name" value="LexA"/>
</dbReference>
<dbReference type="InterPro" id="IPR039418">
    <property type="entry name" value="LexA-like"/>
</dbReference>
<dbReference type="InterPro" id="IPR036286">
    <property type="entry name" value="LexA/Signal_pep-like_sf"/>
</dbReference>
<dbReference type="InterPro" id="IPR006199">
    <property type="entry name" value="LexA_DNA-bd_dom"/>
</dbReference>
<dbReference type="InterPro" id="IPR050077">
    <property type="entry name" value="LexA_repressor"/>
</dbReference>
<dbReference type="InterPro" id="IPR006197">
    <property type="entry name" value="Peptidase_S24_LexA"/>
</dbReference>
<dbReference type="InterPro" id="IPR015927">
    <property type="entry name" value="Peptidase_S24_S26A/B/C"/>
</dbReference>
<dbReference type="InterPro" id="IPR036388">
    <property type="entry name" value="WH-like_DNA-bd_sf"/>
</dbReference>
<dbReference type="InterPro" id="IPR036390">
    <property type="entry name" value="WH_DNA-bd_sf"/>
</dbReference>
<dbReference type="NCBIfam" id="TIGR00498">
    <property type="entry name" value="lexA"/>
    <property type="match status" value="1"/>
</dbReference>
<dbReference type="PANTHER" id="PTHR33516">
    <property type="entry name" value="LEXA REPRESSOR"/>
    <property type="match status" value="1"/>
</dbReference>
<dbReference type="PANTHER" id="PTHR33516:SF2">
    <property type="entry name" value="LEXA REPRESSOR-RELATED"/>
    <property type="match status" value="1"/>
</dbReference>
<dbReference type="Pfam" id="PF01726">
    <property type="entry name" value="LexA_DNA_bind"/>
    <property type="match status" value="1"/>
</dbReference>
<dbReference type="Pfam" id="PF00717">
    <property type="entry name" value="Peptidase_S24"/>
    <property type="match status" value="1"/>
</dbReference>
<dbReference type="PRINTS" id="PR00726">
    <property type="entry name" value="LEXASERPTASE"/>
</dbReference>
<dbReference type="SUPFAM" id="SSF51306">
    <property type="entry name" value="LexA/Signal peptidase"/>
    <property type="match status" value="1"/>
</dbReference>
<dbReference type="SUPFAM" id="SSF46785">
    <property type="entry name" value="Winged helix' DNA-binding domain"/>
    <property type="match status" value="1"/>
</dbReference>
<organism>
    <name type="scientific">Pectobacterium carotovorum subsp. carotovorum (strain PC1)</name>
    <dbReference type="NCBI Taxonomy" id="561230"/>
    <lineage>
        <taxon>Bacteria</taxon>
        <taxon>Pseudomonadati</taxon>
        <taxon>Pseudomonadota</taxon>
        <taxon>Gammaproteobacteria</taxon>
        <taxon>Enterobacterales</taxon>
        <taxon>Pectobacteriaceae</taxon>
        <taxon>Pectobacterium</taxon>
    </lineage>
</organism>
<feature type="chain" id="PRO_1000201825" description="LexA repressor">
    <location>
        <begin position="1"/>
        <end position="202"/>
    </location>
</feature>
<feature type="DNA-binding region" description="H-T-H motif" evidence="1">
    <location>
        <begin position="28"/>
        <end position="48"/>
    </location>
</feature>
<feature type="active site" description="For autocatalytic cleavage activity" evidence="1">
    <location>
        <position position="119"/>
    </location>
</feature>
<feature type="active site" description="For autocatalytic cleavage activity" evidence="1">
    <location>
        <position position="156"/>
    </location>
</feature>
<feature type="site" description="Cleavage; by autolysis" evidence="1">
    <location>
        <begin position="84"/>
        <end position="85"/>
    </location>
</feature>
<reference key="1">
    <citation type="submission" date="2009-07" db="EMBL/GenBank/DDBJ databases">
        <title>Complete sequence of Pectobacterium carotovorum subsp. carotovorum PC1.</title>
        <authorList>
            <consortium name="US DOE Joint Genome Institute"/>
            <person name="Lucas S."/>
            <person name="Copeland A."/>
            <person name="Lapidus A."/>
            <person name="Glavina del Rio T."/>
            <person name="Tice H."/>
            <person name="Bruce D."/>
            <person name="Goodwin L."/>
            <person name="Pitluck S."/>
            <person name="Munk A.C."/>
            <person name="Brettin T."/>
            <person name="Detter J.C."/>
            <person name="Han C."/>
            <person name="Tapia R."/>
            <person name="Larimer F."/>
            <person name="Land M."/>
            <person name="Hauser L."/>
            <person name="Kyrpides N."/>
            <person name="Mikhailova N."/>
            <person name="Balakrishnan V."/>
            <person name="Glasner J."/>
            <person name="Perna N.T."/>
        </authorList>
    </citation>
    <scope>NUCLEOTIDE SEQUENCE [LARGE SCALE GENOMIC DNA]</scope>
    <source>
        <strain>PC1</strain>
    </source>
</reference>
<name>LEXA_PECCP</name>
<gene>
    <name evidence="1" type="primary">lexA</name>
    <name type="ordered locus">PC1_0514</name>
</gene>
<proteinExistence type="inferred from homology"/>
<accession>C6DKD2</accession>